<comment type="function">
    <text evidence="1">Toxin that seems to act by forming pores in the membrane of the cell. Has a hemolytic and a leucotoxic activity (By similarity).</text>
</comment>
<comment type="subunit">
    <text evidence="1">Toxicity requires sequential binding and synergistic association of a class S and a class F component which form heterooligomeric complexes. HlgA (class S) associates with HlgB (class F) thus forming an AB toxin in strains producing both gamma-hemolysins and leukocidins. HlgA and LukF-PV can also form a complex (By similarity).</text>
</comment>
<comment type="subcellular location">
    <subcellularLocation>
        <location evidence="1">Secreted</location>
    </subcellularLocation>
</comment>
<comment type="similarity">
    <text evidence="2">Belongs to the aerolysin family.</text>
</comment>
<name>HLGA_STAAS</name>
<sequence>MIKNKILTATLAVGLIAPLANPFIEISKAENKIEDIGQGAEIIKRTQDITSKRLAITQNIQFDFVKDKKYNKDALVVKMQGFISSRTTYSDLKKYPYIKRMIWPFQYNISLKTKDSNVDLINYLPKNKIDSADVSQKLGYNIGGNFQSAPSIGGSGSFNYSKTISYNQKNYVTEVESQNSKGVKWGVKANSFVTPNGQVSAYDQYLFAQDPTGPAARDYFVPDNQLPPLIQSGFNPSFITTLSHERGKGDKSEFEITYGRNMDATYAYVTRHRLAVDRKHDAFKNRNVTVKYEVNWKTHEVKIKSITPK</sequence>
<organism>
    <name type="scientific">Staphylococcus aureus (strain MSSA476)</name>
    <dbReference type="NCBI Taxonomy" id="282459"/>
    <lineage>
        <taxon>Bacteria</taxon>
        <taxon>Bacillati</taxon>
        <taxon>Bacillota</taxon>
        <taxon>Bacilli</taxon>
        <taxon>Bacillales</taxon>
        <taxon>Staphylococcaceae</taxon>
        <taxon>Staphylococcus</taxon>
    </lineage>
</organism>
<reference key="1">
    <citation type="journal article" date="2004" name="Proc. Natl. Acad. Sci. U.S.A.">
        <title>Complete genomes of two clinical Staphylococcus aureus strains: evidence for the rapid evolution of virulence and drug resistance.</title>
        <authorList>
            <person name="Holden M.T.G."/>
            <person name="Feil E.J."/>
            <person name="Lindsay J.A."/>
            <person name="Peacock S.J."/>
            <person name="Day N.P.J."/>
            <person name="Enright M.C."/>
            <person name="Foster T.J."/>
            <person name="Moore C.E."/>
            <person name="Hurst L."/>
            <person name="Atkin R."/>
            <person name="Barron A."/>
            <person name="Bason N."/>
            <person name="Bentley S.D."/>
            <person name="Chillingworth C."/>
            <person name="Chillingworth T."/>
            <person name="Churcher C."/>
            <person name="Clark L."/>
            <person name="Corton C."/>
            <person name="Cronin A."/>
            <person name="Doggett J."/>
            <person name="Dowd L."/>
            <person name="Feltwell T."/>
            <person name="Hance Z."/>
            <person name="Harris B."/>
            <person name="Hauser H."/>
            <person name="Holroyd S."/>
            <person name="Jagels K."/>
            <person name="James K.D."/>
            <person name="Lennard N."/>
            <person name="Line A."/>
            <person name="Mayes R."/>
            <person name="Moule S."/>
            <person name="Mungall K."/>
            <person name="Ormond D."/>
            <person name="Quail M.A."/>
            <person name="Rabbinowitsch E."/>
            <person name="Rutherford K.M."/>
            <person name="Sanders M."/>
            <person name="Sharp S."/>
            <person name="Simmonds M."/>
            <person name="Stevens K."/>
            <person name="Whitehead S."/>
            <person name="Barrell B.G."/>
            <person name="Spratt B.G."/>
            <person name="Parkhill J."/>
        </authorList>
    </citation>
    <scope>NUCLEOTIDE SEQUENCE [LARGE SCALE GENOMIC DNA]</scope>
    <source>
        <strain>MSSA476</strain>
    </source>
</reference>
<evidence type="ECO:0000250" key="1"/>
<evidence type="ECO:0000305" key="2"/>
<proteinExistence type="inferred from homology"/>
<keyword id="KW-0204">Cytolysis</keyword>
<keyword id="KW-0354">Hemolysis</keyword>
<keyword id="KW-0964">Secreted</keyword>
<keyword id="KW-0732">Signal</keyword>
<keyword id="KW-0800">Toxin</keyword>
<keyword id="KW-0843">Virulence</keyword>
<protein>
    <recommendedName>
        <fullName>Gamma-hemolysin component A</fullName>
    </recommendedName>
    <alternativeName>
        <fullName>H-gamma-2</fullName>
    </alternativeName>
    <alternativeName>
        <fullName>H-gamma-II</fullName>
    </alternativeName>
</protein>
<dbReference type="EMBL" id="BX571857">
    <property type="protein sequence ID" value="CAG44123.1"/>
    <property type="molecule type" value="Genomic_DNA"/>
</dbReference>
<dbReference type="RefSeq" id="WP_000594519.1">
    <property type="nucleotide sequence ID" value="NC_002953.3"/>
</dbReference>
<dbReference type="SMR" id="Q6G6Q2"/>
<dbReference type="KEGG" id="sas:SAS2310"/>
<dbReference type="HOGENOM" id="CLU_075311_0_0_9"/>
<dbReference type="GO" id="GO:0005576">
    <property type="term" value="C:extracellular region"/>
    <property type="evidence" value="ECO:0007669"/>
    <property type="project" value="UniProtKB-SubCell"/>
</dbReference>
<dbReference type="GO" id="GO:0090729">
    <property type="term" value="F:toxin activity"/>
    <property type="evidence" value="ECO:0007669"/>
    <property type="project" value="UniProtKB-KW"/>
</dbReference>
<dbReference type="GO" id="GO:0051715">
    <property type="term" value="P:cytolysis in another organism"/>
    <property type="evidence" value="ECO:0007669"/>
    <property type="project" value="InterPro"/>
</dbReference>
<dbReference type="Gene3D" id="2.70.240.10">
    <property type="entry name" value="Leukocidin/porin MspA"/>
    <property type="match status" value="1"/>
</dbReference>
<dbReference type="InterPro" id="IPR003963">
    <property type="entry name" value="Bi-component_toxin_staph"/>
</dbReference>
<dbReference type="InterPro" id="IPR016183">
    <property type="entry name" value="Leukocidin/Hemolysin_toxin"/>
</dbReference>
<dbReference type="InterPro" id="IPR036435">
    <property type="entry name" value="Leukocidin/porin_MspA_sf"/>
</dbReference>
<dbReference type="NCBIfam" id="TIGR01002">
    <property type="entry name" value="hlyII"/>
    <property type="match status" value="1"/>
</dbReference>
<dbReference type="Pfam" id="PF07968">
    <property type="entry name" value="Leukocidin"/>
    <property type="match status" value="1"/>
</dbReference>
<dbReference type="PRINTS" id="PR01468">
    <property type="entry name" value="BICOMPNTOXIN"/>
</dbReference>
<dbReference type="SUPFAM" id="SSF56959">
    <property type="entry name" value="Leukocidin-like"/>
    <property type="match status" value="1"/>
</dbReference>
<gene>
    <name type="primary">hlgA</name>
    <name type="ordered locus">SAS2310</name>
</gene>
<accession>Q6G6Q2</accession>
<feature type="signal peptide" evidence="1">
    <location>
        <begin position="1"/>
        <end position="29"/>
    </location>
</feature>
<feature type="chain" id="PRO_0000045216" description="Gamma-hemolysin component A">
    <location>
        <begin position="30"/>
        <end position="309"/>
    </location>
</feature>